<sequence length="89" mass="10326">MGLTKEHKTEIITKFGDSATDTGKAEVQVALFTRRITDLTGHLQQHPKDKHSRRGLLMLVGKRKRVLNYLKKVDIERYRKVLADLDLRK</sequence>
<comment type="function">
    <text evidence="1">One of the primary rRNA binding proteins, it binds directly to 16S rRNA where it helps nucleate assembly of the platform of the 30S subunit by binding and bridging several RNA helices of the 16S rRNA.</text>
</comment>
<comment type="function">
    <text evidence="1">Forms an intersubunit bridge (bridge B4) with the 23S rRNA of the 50S subunit in the ribosome.</text>
</comment>
<comment type="subunit">
    <text evidence="1">Part of the 30S ribosomal subunit. Forms a bridge to the 50S subunit in the 70S ribosome, contacting the 23S rRNA.</text>
</comment>
<comment type="similarity">
    <text evidence="1">Belongs to the universal ribosomal protein uS15 family.</text>
</comment>
<dbReference type="EMBL" id="AE006470">
    <property type="protein sequence ID" value="AAM71491.1"/>
    <property type="molecule type" value="Genomic_DNA"/>
</dbReference>
<dbReference type="RefSeq" id="NP_661149.1">
    <property type="nucleotide sequence ID" value="NC_002932.3"/>
</dbReference>
<dbReference type="RefSeq" id="WP_010931937.1">
    <property type="nucleotide sequence ID" value="NC_002932.3"/>
</dbReference>
<dbReference type="SMR" id="Q8KFS7"/>
<dbReference type="STRING" id="194439.CT0245"/>
<dbReference type="EnsemblBacteria" id="AAM71491">
    <property type="protein sequence ID" value="AAM71491"/>
    <property type="gene ID" value="CT0245"/>
</dbReference>
<dbReference type="KEGG" id="cte:CT0245"/>
<dbReference type="PATRIC" id="fig|194439.7.peg.237"/>
<dbReference type="eggNOG" id="COG0184">
    <property type="taxonomic scope" value="Bacteria"/>
</dbReference>
<dbReference type="HOGENOM" id="CLU_148518_0_0_10"/>
<dbReference type="OrthoDB" id="9799262at2"/>
<dbReference type="Proteomes" id="UP000001007">
    <property type="component" value="Chromosome"/>
</dbReference>
<dbReference type="GO" id="GO:0022627">
    <property type="term" value="C:cytosolic small ribosomal subunit"/>
    <property type="evidence" value="ECO:0007669"/>
    <property type="project" value="TreeGrafter"/>
</dbReference>
<dbReference type="GO" id="GO:0019843">
    <property type="term" value="F:rRNA binding"/>
    <property type="evidence" value="ECO:0007669"/>
    <property type="project" value="UniProtKB-UniRule"/>
</dbReference>
<dbReference type="GO" id="GO:0003735">
    <property type="term" value="F:structural constituent of ribosome"/>
    <property type="evidence" value="ECO:0007669"/>
    <property type="project" value="InterPro"/>
</dbReference>
<dbReference type="GO" id="GO:0006412">
    <property type="term" value="P:translation"/>
    <property type="evidence" value="ECO:0007669"/>
    <property type="project" value="UniProtKB-UniRule"/>
</dbReference>
<dbReference type="CDD" id="cd00353">
    <property type="entry name" value="Ribosomal_S15p_S13e"/>
    <property type="match status" value="1"/>
</dbReference>
<dbReference type="FunFam" id="1.10.287.10:FF:000002">
    <property type="entry name" value="30S ribosomal protein S15"/>
    <property type="match status" value="1"/>
</dbReference>
<dbReference type="Gene3D" id="6.10.250.3130">
    <property type="match status" value="1"/>
</dbReference>
<dbReference type="Gene3D" id="1.10.287.10">
    <property type="entry name" value="S15/NS1, RNA-binding"/>
    <property type="match status" value="1"/>
</dbReference>
<dbReference type="HAMAP" id="MF_01343_B">
    <property type="entry name" value="Ribosomal_uS15_B"/>
    <property type="match status" value="1"/>
</dbReference>
<dbReference type="InterPro" id="IPR000589">
    <property type="entry name" value="Ribosomal_uS15"/>
</dbReference>
<dbReference type="InterPro" id="IPR005290">
    <property type="entry name" value="Ribosomal_uS15_bac-type"/>
</dbReference>
<dbReference type="InterPro" id="IPR009068">
    <property type="entry name" value="uS15_NS1_RNA-bd_sf"/>
</dbReference>
<dbReference type="NCBIfam" id="TIGR00952">
    <property type="entry name" value="S15_bact"/>
    <property type="match status" value="1"/>
</dbReference>
<dbReference type="PANTHER" id="PTHR23321">
    <property type="entry name" value="RIBOSOMAL PROTEIN S15, BACTERIAL AND ORGANELLAR"/>
    <property type="match status" value="1"/>
</dbReference>
<dbReference type="PANTHER" id="PTHR23321:SF26">
    <property type="entry name" value="SMALL RIBOSOMAL SUBUNIT PROTEIN US15M"/>
    <property type="match status" value="1"/>
</dbReference>
<dbReference type="Pfam" id="PF00312">
    <property type="entry name" value="Ribosomal_S15"/>
    <property type="match status" value="1"/>
</dbReference>
<dbReference type="SMART" id="SM01387">
    <property type="entry name" value="Ribosomal_S15"/>
    <property type="match status" value="1"/>
</dbReference>
<dbReference type="SUPFAM" id="SSF47060">
    <property type="entry name" value="S15/NS1 RNA-binding domain"/>
    <property type="match status" value="1"/>
</dbReference>
<dbReference type="PROSITE" id="PS00362">
    <property type="entry name" value="RIBOSOMAL_S15"/>
    <property type="match status" value="1"/>
</dbReference>
<evidence type="ECO:0000255" key="1">
    <source>
        <dbReference type="HAMAP-Rule" id="MF_01343"/>
    </source>
</evidence>
<evidence type="ECO:0000305" key="2"/>
<gene>
    <name evidence="1" type="primary">rpsO</name>
    <name type="ordered locus">CT0245</name>
</gene>
<name>RS15_CHLTE</name>
<protein>
    <recommendedName>
        <fullName evidence="1">Small ribosomal subunit protein uS15</fullName>
    </recommendedName>
    <alternativeName>
        <fullName evidence="2">30S ribosomal protein S15</fullName>
    </alternativeName>
</protein>
<organism>
    <name type="scientific">Chlorobaculum tepidum (strain ATCC 49652 / DSM 12025 / NBRC 103806 / TLS)</name>
    <name type="common">Chlorobium tepidum</name>
    <dbReference type="NCBI Taxonomy" id="194439"/>
    <lineage>
        <taxon>Bacteria</taxon>
        <taxon>Pseudomonadati</taxon>
        <taxon>Chlorobiota</taxon>
        <taxon>Chlorobiia</taxon>
        <taxon>Chlorobiales</taxon>
        <taxon>Chlorobiaceae</taxon>
        <taxon>Chlorobaculum</taxon>
    </lineage>
</organism>
<keyword id="KW-1185">Reference proteome</keyword>
<keyword id="KW-0687">Ribonucleoprotein</keyword>
<keyword id="KW-0689">Ribosomal protein</keyword>
<keyword id="KW-0694">RNA-binding</keyword>
<keyword id="KW-0699">rRNA-binding</keyword>
<feature type="chain" id="PRO_0000115416" description="Small ribosomal subunit protein uS15">
    <location>
        <begin position="1"/>
        <end position="89"/>
    </location>
</feature>
<reference key="1">
    <citation type="journal article" date="2002" name="Proc. Natl. Acad. Sci. U.S.A.">
        <title>The complete genome sequence of Chlorobium tepidum TLS, a photosynthetic, anaerobic, green-sulfur bacterium.</title>
        <authorList>
            <person name="Eisen J.A."/>
            <person name="Nelson K.E."/>
            <person name="Paulsen I.T."/>
            <person name="Heidelberg J.F."/>
            <person name="Wu M."/>
            <person name="Dodson R.J."/>
            <person name="DeBoy R.T."/>
            <person name="Gwinn M.L."/>
            <person name="Nelson W.C."/>
            <person name="Haft D.H."/>
            <person name="Hickey E.K."/>
            <person name="Peterson J.D."/>
            <person name="Durkin A.S."/>
            <person name="Kolonay J.F."/>
            <person name="Yang F."/>
            <person name="Holt I.E."/>
            <person name="Umayam L.A."/>
            <person name="Mason T.M."/>
            <person name="Brenner M."/>
            <person name="Shea T.P."/>
            <person name="Parksey D.S."/>
            <person name="Nierman W.C."/>
            <person name="Feldblyum T.V."/>
            <person name="Hansen C.L."/>
            <person name="Craven M.B."/>
            <person name="Radune D."/>
            <person name="Vamathevan J.J."/>
            <person name="Khouri H.M."/>
            <person name="White O."/>
            <person name="Gruber T.M."/>
            <person name="Ketchum K.A."/>
            <person name="Venter J.C."/>
            <person name="Tettelin H."/>
            <person name="Bryant D.A."/>
            <person name="Fraser C.M."/>
        </authorList>
    </citation>
    <scope>NUCLEOTIDE SEQUENCE [LARGE SCALE GENOMIC DNA]</scope>
    <source>
        <strain>ATCC 49652 / DSM 12025 / NBRC 103806 / TLS</strain>
    </source>
</reference>
<proteinExistence type="inferred from homology"/>
<accession>Q8KFS7</accession>